<dbReference type="PDB" id="3GPR">
    <property type="method" value="X-ray"/>
    <property type="resolution" value="3.20 A"/>
    <property type="chains" value="D=1-124"/>
</dbReference>
<dbReference type="PDB" id="5THP">
    <property type="method" value="X-ray"/>
    <property type="resolution" value="3.01 A"/>
    <property type="chains" value="B/E/H/K/N/Q=1-124"/>
</dbReference>
<dbReference type="PDB" id="6ND8">
    <property type="method" value="X-ray"/>
    <property type="resolution" value="2.90 A"/>
    <property type="chains" value="B/E/H/K/N/Q=1-124"/>
</dbReference>
<dbReference type="PDB" id="6ND9">
    <property type="method" value="X-ray"/>
    <property type="resolution" value="2.90 A"/>
    <property type="chains" value="B/E/H/K/N/Q=1-124"/>
</dbReference>
<dbReference type="PDB" id="6NDA">
    <property type="method" value="X-ray"/>
    <property type="resolution" value="3.15 A"/>
    <property type="chains" value="B/E/H/K/N/Q=1-124"/>
</dbReference>
<dbReference type="PDB" id="6NDB">
    <property type="method" value="X-ray"/>
    <property type="resolution" value="3.20 A"/>
    <property type="chains" value="B/E/H/K/N/Q=1-124"/>
</dbReference>
<dbReference type="PDB" id="6NDC">
    <property type="method" value="X-ray"/>
    <property type="resolution" value="3.35 A"/>
    <property type="chains" value="B/E/H/K/N/Q=1-124"/>
</dbReference>
<dbReference type="PDB" id="6NDD">
    <property type="method" value="X-ray"/>
    <property type="resolution" value="3.05 A"/>
    <property type="chains" value="B/E/H/K/N/Q=1-124"/>
</dbReference>
<dbReference type="PDB" id="6NDE">
    <property type="method" value="X-ray"/>
    <property type="resolution" value="3.50 A"/>
    <property type="chains" value="B/E/H/K/N/Q=1-124"/>
</dbReference>
<dbReference type="PDB" id="6NDF">
    <property type="method" value="X-ray"/>
    <property type="resolution" value="3.05 A"/>
    <property type="chains" value="B/E/H/K/N/Q=1-124"/>
</dbReference>
<dbReference type="PDB" id="6NDG">
    <property type="method" value="X-ray"/>
    <property type="resolution" value="3.15 A"/>
    <property type="chains" value="B/E/H/K/N/Q=1-124"/>
</dbReference>
<dbReference type="PDB" id="6NDH">
    <property type="method" value="X-ray"/>
    <property type="resolution" value="2.90 A"/>
    <property type="chains" value="B/E/H/K/N/Q=1-124"/>
</dbReference>
<dbReference type="PDBsum" id="3GPR"/>
<dbReference type="PDBsum" id="5THP"/>
<dbReference type="PDBsum" id="6ND8"/>
<dbReference type="PDBsum" id="6ND9"/>
<dbReference type="PDBsum" id="6NDA"/>
<dbReference type="PDBsum" id="6NDB"/>
<dbReference type="PDBsum" id="6NDC"/>
<dbReference type="PDBsum" id="6NDD"/>
<dbReference type="PDBsum" id="6NDE"/>
<dbReference type="PDBsum" id="6NDF"/>
<dbReference type="PDBsum" id="6NDG"/>
<dbReference type="PDBsum" id="6NDH"/>
<dbReference type="SMR" id="D2YW40"/>
<dbReference type="EvolutionaryTrace" id="D2YW40"/>
<dbReference type="GO" id="GO:0005576">
    <property type="term" value="C:extracellular region"/>
    <property type="evidence" value="ECO:0007669"/>
    <property type="project" value="UniProtKB-SubCell"/>
</dbReference>
<dbReference type="GO" id="GO:0090729">
    <property type="term" value="F:toxin activity"/>
    <property type="evidence" value="ECO:0007669"/>
    <property type="project" value="UniProtKB-KW"/>
</dbReference>
<dbReference type="FunFam" id="3.10.100.10:FF:000087">
    <property type="entry name" value="Snaclec rhodocetin subunit delta"/>
    <property type="match status" value="1"/>
</dbReference>
<dbReference type="Gene3D" id="3.10.100.10">
    <property type="entry name" value="Mannose-Binding Protein A, subunit A"/>
    <property type="match status" value="1"/>
</dbReference>
<dbReference type="InterPro" id="IPR001304">
    <property type="entry name" value="C-type_lectin-like"/>
</dbReference>
<dbReference type="InterPro" id="IPR016186">
    <property type="entry name" value="C-type_lectin-like/link_sf"/>
</dbReference>
<dbReference type="InterPro" id="IPR050111">
    <property type="entry name" value="C-type_lectin/snaclec_domain"/>
</dbReference>
<dbReference type="InterPro" id="IPR018378">
    <property type="entry name" value="C-type_lectin_CS"/>
</dbReference>
<dbReference type="InterPro" id="IPR016187">
    <property type="entry name" value="CTDL_fold"/>
</dbReference>
<dbReference type="PANTHER" id="PTHR22803">
    <property type="entry name" value="MANNOSE, PHOSPHOLIPASE, LECTIN RECEPTOR RELATED"/>
    <property type="match status" value="1"/>
</dbReference>
<dbReference type="Pfam" id="PF00059">
    <property type="entry name" value="Lectin_C"/>
    <property type="match status" value="1"/>
</dbReference>
<dbReference type="SMART" id="SM00034">
    <property type="entry name" value="CLECT"/>
    <property type="match status" value="1"/>
</dbReference>
<dbReference type="SUPFAM" id="SSF56436">
    <property type="entry name" value="C-type lectin-like"/>
    <property type="match status" value="1"/>
</dbReference>
<dbReference type="PROSITE" id="PS00615">
    <property type="entry name" value="C_TYPE_LECTIN_1"/>
    <property type="match status" value="1"/>
</dbReference>
<dbReference type="PROSITE" id="PS50041">
    <property type="entry name" value="C_TYPE_LECTIN_2"/>
    <property type="match status" value="1"/>
</dbReference>
<evidence type="ECO:0000255" key="1">
    <source>
        <dbReference type="PROSITE-ProRule" id="PRU00040"/>
    </source>
</evidence>
<evidence type="ECO:0000269" key="2">
    <source>
    </source>
</evidence>
<evidence type="ECO:0000269" key="3">
    <source>
    </source>
</evidence>
<evidence type="ECO:0000269" key="4">
    <source>
    </source>
</evidence>
<evidence type="ECO:0000305" key="5"/>
<evidence type="ECO:0007829" key="6">
    <source>
        <dbReference type="PDB" id="3GPR"/>
    </source>
</evidence>
<evidence type="ECO:0007829" key="7">
    <source>
        <dbReference type="PDB" id="5THP"/>
    </source>
</evidence>
<evidence type="ECO:0007829" key="8">
    <source>
        <dbReference type="PDB" id="6ND8"/>
    </source>
</evidence>
<evidence type="ECO:0007829" key="9">
    <source>
        <dbReference type="PDB" id="6ND9"/>
    </source>
</evidence>
<sequence>CPLHWSSYNGYCYRVFSELKTWEDAESFCYAQHKGSRLASIHSREEEAFVGKLASQTLKYTSMWLGLNNPWKECKWEWSDDAKLDYKVWLRRPYCAVMVVKTDRIFWFNRGCEKTVSFVCKFYS</sequence>
<reference key="1">
    <citation type="journal article" date="2009" name="FASEB J.">
        <title>The alpha2beta1 integrin-specific antagonist rhodocetin is a cruciform, heterotetrameric molecule.</title>
        <authorList>
            <person name="Eble J.A."/>
            <person name="Niland S."/>
            <person name="Bracht T."/>
            <person name="Mormann M."/>
            <person name="Peter-Katalinic J."/>
            <person name="Pohlentz G."/>
            <person name="Stetefeld J."/>
        </authorList>
    </citation>
    <scope>PROTEIN SEQUENCE</scope>
    <scope>SUBUNIT</scope>
    <scope>DISULFIDE BONDS</scope>
    <scope>IDENTIFICATION BY MASS SPECTROMETRY</scope>
    <scope>X-RAY CRYSTALLOGRAPHY (3.2 ANGSTROMS) OF HETEROTETRAMER</scope>
    <source>
        <tissue>Venom</tissue>
    </source>
</reference>
<reference key="2">
    <citation type="journal article" date="2001" name="J. Biol. Chem.">
        <title>alpha 2beta 1 integrin is not recognized by rhodocytin but is the specific, high affinity target of rhodocetin, an RGD-independent disintegrin and potent inhibitor of cell adhesion to collagen.</title>
        <authorList>
            <person name="Eble J.A."/>
            <person name="Beermann B."/>
            <person name="Hinz H.J."/>
            <person name="Schmidt-Hederich A."/>
        </authorList>
    </citation>
    <scope>FUNCTION</scope>
</reference>
<reference key="3">
    <citation type="journal article" date="2003" name="Biochem. J.">
        <title>The alpha2beta1 integrin inhibitor rhodocetin binds to the A-domain of the integrin alpha2 subunit proximal to the collagen-binding site.</title>
        <authorList>
            <person name="Eble J.A."/>
            <person name="Tuckwell D.S."/>
        </authorList>
    </citation>
    <scope>FUNCTION</scope>
</reference>
<protein>
    <recommendedName>
        <fullName>Snaclec rhodocetin subunit delta</fullName>
    </recommendedName>
</protein>
<organism>
    <name type="scientific">Calloselasma rhodostoma</name>
    <name type="common">Malayan pit viper</name>
    <name type="synonym">Agkistrodon rhodostoma</name>
    <dbReference type="NCBI Taxonomy" id="8717"/>
    <lineage>
        <taxon>Eukaryota</taxon>
        <taxon>Metazoa</taxon>
        <taxon>Chordata</taxon>
        <taxon>Craniata</taxon>
        <taxon>Vertebrata</taxon>
        <taxon>Euteleostomi</taxon>
        <taxon>Lepidosauria</taxon>
        <taxon>Squamata</taxon>
        <taxon>Bifurcata</taxon>
        <taxon>Unidentata</taxon>
        <taxon>Episquamata</taxon>
        <taxon>Toxicofera</taxon>
        <taxon>Serpentes</taxon>
        <taxon>Colubroidea</taxon>
        <taxon>Viperidae</taxon>
        <taxon>Crotalinae</taxon>
        <taxon>Calloselasma</taxon>
    </lineage>
</organism>
<keyword id="KW-0002">3D-structure</keyword>
<keyword id="KW-0903">Direct protein sequencing</keyword>
<keyword id="KW-1015">Disulfide bond</keyword>
<keyword id="KW-1199">Hemostasis impairing toxin</keyword>
<keyword id="KW-1201">Platelet aggregation inhibiting toxin</keyword>
<keyword id="KW-0964">Secreted</keyword>
<keyword id="KW-0800">Toxin</keyword>
<proteinExistence type="evidence at protein level"/>
<feature type="chain" id="PRO_0000422611" description="Snaclec rhodocetin subunit delta">
    <location>
        <begin position="1"/>
        <end position="124"/>
    </location>
</feature>
<feature type="domain" description="C-type lectin" evidence="1">
    <location>
        <begin position="8"/>
        <end position="121"/>
    </location>
</feature>
<feature type="disulfide bond" evidence="1 4">
    <location>
        <begin position="1"/>
        <end position="12"/>
    </location>
</feature>
<feature type="disulfide bond" evidence="1 4">
    <location>
        <begin position="29"/>
        <end position="120"/>
    </location>
</feature>
<feature type="disulfide bond" description="Interchain (with C-80 in subunit gamma of heterotetrameric partner)" evidence="1 4">
    <location>
        <position position="74"/>
    </location>
</feature>
<feature type="disulfide bond" evidence="1 4">
    <location>
        <begin position="95"/>
        <end position="112"/>
    </location>
</feature>
<feature type="unsure residue" description="Assigned by comparison with orthologs">
    <location>
        <position position="19"/>
    </location>
</feature>
<feature type="unsure residue" description="Assigned by comparison with orthologs">
    <location>
        <position position="38"/>
    </location>
</feature>
<feature type="unsure residue" description="Assigned by comparison with orthologs">
    <location>
        <position position="41"/>
    </location>
</feature>
<feature type="unsure residue" description="Assigned by comparison with orthologs">
    <location>
        <position position="53"/>
    </location>
</feature>
<feature type="unsure residue" description="Assigned by comparison with orthologs">
    <location>
        <position position="58"/>
    </location>
</feature>
<feature type="unsure residue" description="Assigned by comparison with orthologs">
    <location>
        <position position="65"/>
    </location>
</feature>
<feature type="unsure residue" description="Assigned by comparison with orthologs">
    <location>
        <position position="67"/>
    </location>
</feature>
<feature type="unsure residue" description="Assigned by comparison with orthologs">
    <location>
        <position position="84"/>
    </location>
</feature>
<feature type="unsure residue" description="Assigned by comparison with orthologs">
    <location>
        <position position="90"/>
    </location>
</feature>
<feature type="unsure residue" description="Assigned by comparison with orthologs">
    <location>
        <position position="105"/>
    </location>
</feature>
<feature type="sequence conflict" description="In Ref. 1; AA sequence." evidence="5" ref="1">
    <original>PWKE</original>
    <variation>AWAA</variation>
    <location>
        <begin position="70"/>
        <end position="73"/>
    </location>
</feature>
<feature type="sequence conflict" description="In Ref. 1; AA sequence." evidence="5" ref="1">
    <original>P</original>
    <variation>A</variation>
    <location>
        <position position="93"/>
    </location>
</feature>
<feature type="sequence conflict" description="In Ref. 1; AA sequence." evidence="5" ref="1">
    <original>F</original>
    <variation>Y</variation>
    <location>
        <position position="108"/>
    </location>
</feature>
<feature type="sequence conflict" description="In Ref. 1; AA sequence." evidence="5" ref="1">
    <original>V</original>
    <variation>L</variation>
    <location>
        <position position="119"/>
    </location>
</feature>
<feature type="strand" evidence="9">
    <location>
        <begin position="6"/>
        <end position="8"/>
    </location>
</feature>
<feature type="strand" evidence="8">
    <location>
        <begin position="11"/>
        <end position="20"/>
    </location>
</feature>
<feature type="helix" evidence="8">
    <location>
        <begin position="22"/>
        <end position="30"/>
    </location>
</feature>
<feature type="strand" evidence="7">
    <location>
        <begin position="31"/>
        <end position="34"/>
    </location>
</feature>
<feature type="helix" evidence="8">
    <location>
        <begin position="44"/>
        <end position="57"/>
    </location>
</feature>
<feature type="strand" evidence="8">
    <location>
        <begin position="62"/>
        <end position="68"/>
    </location>
</feature>
<feature type="turn" evidence="8">
    <location>
        <begin position="70"/>
        <end position="73"/>
    </location>
</feature>
<feature type="strand" evidence="8">
    <location>
        <begin position="76"/>
        <end position="78"/>
    </location>
</feature>
<feature type="strand" evidence="8">
    <location>
        <begin position="94"/>
        <end position="100"/>
    </location>
</feature>
<feature type="strand" evidence="6">
    <location>
        <begin position="102"/>
        <end position="104"/>
    </location>
</feature>
<feature type="strand" evidence="8">
    <location>
        <begin position="105"/>
        <end position="111"/>
    </location>
</feature>
<feature type="strand" evidence="8">
    <location>
        <begin position="116"/>
        <end position="121"/>
    </location>
</feature>
<accession>D2YW40</accession>
<comment type="function">
    <text evidence="2 3">Potent inhibitor of collagen-induced platelet aggregation. It acts by binding to the integrin alpha2A domain and blocks collagen binding to integrin alpha-2/beta-1 (ITGA2/ITGB1). The gamma/delta subunits mainly contribute to this activity.</text>
</comment>
<comment type="subunit">
    <text evidence="2 4">Heterotetramer of subunit alpha, beta, gamma and delta; only the gamma and the delta subunits are disulfide-linked. Alpha-beta heterodimer and gamma-delta heterodimer associate orthogonally, giving a cruciform conformation (PubMed:19369383). This heterotetramer may covalently dimerizes thanks to the gamma subunit (PubMed:11121411).</text>
</comment>
<comment type="subcellular location">
    <subcellularLocation>
        <location>Secreted</location>
    </subcellularLocation>
</comment>
<comment type="tissue specificity">
    <text>Expressed by the venom gland.</text>
</comment>
<comment type="similarity">
    <text evidence="5">Belongs to the snaclec family.</text>
</comment>
<name>SLED_CALRH</name>